<evidence type="ECO:0000255" key="1">
    <source>
        <dbReference type="HAMAP-Rule" id="MF_01014"/>
    </source>
</evidence>
<protein>
    <recommendedName>
        <fullName evidence="1">1-(5-phosphoribosyl)-5-[(5-phosphoribosylamino)methylideneamino] imidazole-4-carboxamide isomerase</fullName>
        <ecNumber evidence="1">5.3.1.16</ecNumber>
    </recommendedName>
    <alternativeName>
        <fullName evidence="1">Phosphoribosylformimino-5-aminoimidazole carboxamide ribotide isomerase</fullName>
    </alternativeName>
</protein>
<accession>B5EQF1</accession>
<gene>
    <name evidence="1" type="primary">hisA</name>
    <name type="ordered locus">Lferr_2654</name>
</gene>
<dbReference type="EC" id="5.3.1.16" evidence="1"/>
<dbReference type="EMBL" id="CP001132">
    <property type="protein sequence ID" value="ACH84848.1"/>
    <property type="molecule type" value="Genomic_DNA"/>
</dbReference>
<dbReference type="RefSeq" id="WP_012537567.1">
    <property type="nucleotide sequence ID" value="NC_011206.1"/>
</dbReference>
<dbReference type="SMR" id="B5EQF1"/>
<dbReference type="GeneID" id="65282047"/>
<dbReference type="KEGG" id="afe:Lferr_2654"/>
<dbReference type="eggNOG" id="COG0106">
    <property type="taxonomic scope" value="Bacteria"/>
</dbReference>
<dbReference type="HOGENOM" id="CLU_048577_1_1_6"/>
<dbReference type="UniPathway" id="UPA00031">
    <property type="reaction ID" value="UER00009"/>
</dbReference>
<dbReference type="GO" id="GO:0005737">
    <property type="term" value="C:cytoplasm"/>
    <property type="evidence" value="ECO:0007669"/>
    <property type="project" value="UniProtKB-SubCell"/>
</dbReference>
<dbReference type="GO" id="GO:0003949">
    <property type="term" value="F:1-(5-phosphoribosyl)-5-[(5-phosphoribosylamino)methylideneamino]imidazole-4-carboxamide isomerase activity"/>
    <property type="evidence" value="ECO:0007669"/>
    <property type="project" value="UniProtKB-UniRule"/>
</dbReference>
<dbReference type="GO" id="GO:0000105">
    <property type="term" value="P:L-histidine biosynthetic process"/>
    <property type="evidence" value="ECO:0007669"/>
    <property type="project" value="UniProtKB-UniRule"/>
</dbReference>
<dbReference type="GO" id="GO:0000162">
    <property type="term" value="P:L-tryptophan biosynthetic process"/>
    <property type="evidence" value="ECO:0007669"/>
    <property type="project" value="TreeGrafter"/>
</dbReference>
<dbReference type="CDD" id="cd04732">
    <property type="entry name" value="HisA"/>
    <property type="match status" value="1"/>
</dbReference>
<dbReference type="FunFam" id="3.20.20.70:FF:000009">
    <property type="entry name" value="1-(5-phosphoribosyl)-5-[(5-phosphoribosylamino)methylideneamino] imidazole-4-carboxamide isomerase"/>
    <property type="match status" value="1"/>
</dbReference>
<dbReference type="Gene3D" id="3.20.20.70">
    <property type="entry name" value="Aldolase class I"/>
    <property type="match status" value="1"/>
</dbReference>
<dbReference type="HAMAP" id="MF_01014">
    <property type="entry name" value="HisA"/>
    <property type="match status" value="1"/>
</dbReference>
<dbReference type="InterPro" id="IPR013785">
    <property type="entry name" value="Aldolase_TIM"/>
</dbReference>
<dbReference type="InterPro" id="IPR006062">
    <property type="entry name" value="His_biosynth"/>
</dbReference>
<dbReference type="InterPro" id="IPR006063">
    <property type="entry name" value="HisA_bact_arch"/>
</dbReference>
<dbReference type="InterPro" id="IPR044524">
    <property type="entry name" value="Isoase_HisA-like"/>
</dbReference>
<dbReference type="InterPro" id="IPR023016">
    <property type="entry name" value="Isoase_HisA-like_bact"/>
</dbReference>
<dbReference type="InterPro" id="IPR011060">
    <property type="entry name" value="RibuloseP-bd_barrel"/>
</dbReference>
<dbReference type="NCBIfam" id="TIGR00007">
    <property type="entry name" value="1-(5-phosphoribosyl)-5-[(5-phosphoribosylamino)methylideneamino]imidazole-4-carboxamide isomerase"/>
    <property type="match status" value="1"/>
</dbReference>
<dbReference type="PANTHER" id="PTHR43090">
    <property type="entry name" value="1-(5-PHOSPHORIBOSYL)-5-[(5-PHOSPHORIBOSYLAMINO)METHYLIDENEAMINO] IMIDAZOLE-4-CARBOXAMIDE ISOMERASE"/>
    <property type="match status" value="1"/>
</dbReference>
<dbReference type="PANTHER" id="PTHR43090:SF2">
    <property type="entry name" value="1-(5-PHOSPHORIBOSYL)-5-[(5-PHOSPHORIBOSYLAMINO)METHYLIDENEAMINO] IMIDAZOLE-4-CARBOXAMIDE ISOMERASE"/>
    <property type="match status" value="1"/>
</dbReference>
<dbReference type="Pfam" id="PF00977">
    <property type="entry name" value="His_biosynth"/>
    <property type="match status" value="1"/>
</dbReference>
<dbReference type="SUPFAM" id="SSF51366">
    <property type="entry name" value="Ribulose-phoshate binding barrel"/>
    <property type="match status" value="1"/>
</dbReference>
<sequence length="242" mass="25366">MLLIPAIDLKGGNCVRLRQGRMEDDTVFSDDPVATAQRWVEAGAKRLHIVDLDGAVQGEPVNAHAIAAICAGFPDLEIQVGGGIRSEEQIETYIQAGVRYVIIGTQAVKAPGFVADATVSFPGHIMVGIDARDGKVATEGWSKLSRHDPIDLAQRFAADGIEAIIYTDISRDGMLSGPNISATVALAQAVPVPVIASGGIANLEQVLALKAHESDGITGAITGRAIYEGTLDFSQARAQAEA</sequence>
<proteinExistence type="inferred from homology"/>
<reference key="1">
    <citation type="submission" date="2008-08" db="EMBL/GenBank/DDBJ databases">
        <title>Complete sequence of Acidithiobacillus ferrooxidans ATCC 53993.</title>
        <authorList>
            <person name="Lucas S."/>
            <person name="Copeland A."/>
            <person name="Lapidus A."/>
            <person name="Glavina del Rio T."/>
            <person name="Dalin E."/>
            <person name="Tice H."/>
            <person name="Bruce D."/>
            <person name="Goodwin L."/>
            <person name="Pitluck S."/>
            <person name="Sims D."/>
            <person name="Brettin T."/>
            <person name="Detter J.C."/>
            <person name="Han C."/>
            <person name="Kuske C.R."/>
            <person name="Larimer F."/>
            <person name="Land M."/>
            <person name="Hauser L."/>
            <person name="Kyrpides N."/>
            <person name="Lykidis A."/>
            <person name="Borole A.P."/>
        </authorList>
    </citation>
    <scope>NUCLEOTIDE SEQUENCE [LARGE SCALE GENOMIC DNA]</scope>
    <source>
        <strain>ATCC 53993 / BNL-5-31</strain>
    </source>
</reference>
<keyword id="KW-0028">Amino-acid biosynthesis</keyword>
<keyword id="KW-0963">Cytoplasm</keyword>
<keyword id="KW-0368">Histidine biosynthesis</keyword>
<keyword id="KW-0413">Isomerase</keyword>
<organism>
    <name type="scientific">Acidithiobacillus ferrooxidans (strain ATCC 53993 / BNL-5-31)</name>
    <name type="common">Leptospirillum ferrooxidans (ATCC 53993)</name>
    <dbReference type="NCBI Taxonomy" id="380394"/>
    <lineage>
        <taxon>Bacteria</taxon>
        <taxon>Pseudomonadati</taxon>
        <taxon>Pseudomonadota</taxon>
        <taxon>Acidithiobacillia</taxon>
        <taxon>Acidithiobacillales</taxon>
        <taxon>Acidithiobacillaceae</taxon>
        <taxon>Acidithiobacillus</taxon>
    </lineage>
</organism>
<feature type="chain" id="PRO_1000135071" description="1-(5-phosphoribosyl)-5-[(5-phosphoribosylamino)methylideneamino] imidazole-4-carboxamide isomerase">
    <location>
        <begin position="1"/>
        <end position="242"/>
    </location>
</feature>
<feature type="active site" description="Proton acceptor" evidence="1">
    <location>
        <position position="8"/>
    </location>
</feature>
<feature type="active site" description="Proton donor" evidence="1">
    <location>
        <position position="130"/>
    </location>
</feature>
<name>HIS4_ACIF5</name>
<comment type="catalytic activity">
    <reaction evidence="1">
        <text>1-(5-phospho-beta-D-ribosyl)-5-[(5-phospho-beta-D-ribosylamino)methylideneamino]imidazole-4-carboxamide = 5-[(5-phospho-1-deoxy-D-ribulos-1-ylimino)methylamino]-1-(5-phospho-beta-D-ribosyl)imidazole-4-carboxamide</text>
        <dbReference type="Rhea" id="RHEA:15469"/>
        <dbReference type="ChEBI" id="CHEBI:58435"/>
        <dbReference type="ChEBI" id="CHEBI:58525"/>
        <dbReference type="EC" id="5.3.1.16"/>
    </reaction>
</comment>
<comment type="pathway">
    <text evidence="1">Amino-acid biosynthesis; L-histidine biosynthesis; L-histidine from 5-phospho-alpha-D-ribose 1-diphosphate: step 4/9.</text>
</comment>
<comment type="subcellular location">
    <subcellularLocation>
        <location evidence="1">Cytoplasm</location>
    </subcellularLocation>
</comment>
<comment type="similarity">
    <text evidence="1">Belongs to the HisA/HisF family.</text>
</comment>